<organism>
    <name type="scientific">Serratia proteamaculans (strain 568)</name>
    <dbReference type="NCBI Taxonomy" id="399741"/>
    <lineage>
        <taxon>Bacteria</taxon>
        <taxon>Pseudomonadati</taxon>
        <taxon>Pseudomonadota</taxon>
        <taxon>Gammaproteobacteria</taxon>
        <taxon>Enterobacterales</taxon>
        <taxon>Yersiniaceae</taxon>
        <taxon>Serratia</taxon>
    </lineage>
</organism>
<evidence type="ECO:0000255" key="1">
    <source>
        <dbReference type="HAMAP-Rule" id="MF_00014"/>
    </source>
</evidence>
<feature type="chain" id="PRO_1000057121" description="Ribosome maturation factor RimM">
    <location>
        <begin position="1"/>
        <end position="182"/>
    </location>
</feature>
<feature type="domain" description="PRC barrel" evidence="1">
    <location>
        <begin position="103"/>
        <end position="182"/>
    </location>
</feature>
<proteinExistence type="inferred from homology"/>
<reference key="1">
    <citation type="submission" date="2007-09" db="EMBL/GenBank/DDBJ databases">
        <title>Complete sequence of chromosome of Serratia proteamaculans 568.</title>
        <authorList>
            <consortium name="US DOE Joint Genome Institute"/>
            <person name="Copeland A."/>
            <person name="Lucas S."/>
            <person name="Lapidus A."/>
            <person name="Barry K."/>
            <person name="Glavina del Rio T."/>
            <person name="Dalin E."/>
            <person name="Tice H."/>
            <person name="Pitluck S."/>
            <person name="Chain P."/>
            <person name="Malfatti S."/>
            <person name="Shin M."/>
            <person name="Vergez L."/>
            <person name="Schmutz J."/>
            <person name="Larimer F."/>
            <person name="Land M."/>
            <person name="Hauser L."/>
            <person name="Kyrpides N."/>
            <person name="Kim E."/>
            <person name="Taghavi S."/>
            <person name="Newman L."/>
            <person name="Vangronsveld J."/>
            <person name="van der Lelie D."/>
            <person name="Richardson P."/>
        </authorList>
    </citation>
    <scope>NUCLEOTIDE SEQUENCE [LARGE SCALE GENOMIC DNA]</scope>
    <source>
        <strain>568</strain>
    </source>
</reference>
<protein>
    <recommendedName>
        <fullName evidence="1">Ribosome maturation factor RimM</fullName>
    </recommendedName>
</protein>
<dbReference type="EMBL" id="CP000826">
    <property type="protein sequence ID" value="ABV39959.1"/>
    <property type="molecule type" value="Genomic_DNA"/>
</dbReference>
<dbReference type="SMR" id="A8GA19"/>
<dbReference type="STRING" id="399741.Spro_0853"/>
<dbReference type="KEGG" id="spe:Spro_0853"/>
<dbReference type="eggNOG" id="COG0806">
    <property type="taxonomic scope" value="Bacteria"/>
</dbReference>
<dbReference type="HOGENOM" id="CLU_077636_1_0_6"/>
<dbReference type="OrthoDB" id="9783509at2"/>
<dbReference type="GO" id="GO:0005737">
    <property type="term" value="C:cytoplasm"/>
    <property type="evidence" value="ECO:0007669"/>
    <property type="project" value="UniProtKB-SubCell"/>
</dbReference>
<dbReference type="GO" id="GO:0005840">
    <property type="term" value="C:ribosome"/>
    <property type="evidence" value="ECO:0007669"/>
    <property type="project" value="InterPro"/>
</dbReference>
<dbReference type="GO" id="GO:0043022">
    <property type="term" value="F:ribosome binding"/>
    <property type="evidence" value="ECO:0007669"/>
    <property type="project" value="InterPro"/>
</dbReference>
<dbReference type="GO" id="GO:0042274">
    <property type="term" value="P:ribosomal small subunit biogenesis"/>
    <property type="evidence" value="ECO:0007669"/>
    <property type="project" value="UniProtKB-UniRule"/>
</dbReference>
<dbReference type="GO" id="GO:0006364">
    <property type="term" value="P:rRNA processing"/>
    <property type="evidence" value="ECO:0007669"/>
    <property type="project" value="UniProtKB-UniRule"/>
</dbReference>
<dbReference type="FunFam" id="2.30.30.240:FF:000001">
    <property type="entry name" value="Ribosome maturation factor RimM"/>
    <property type="match status" value="1"/>
</dbReference>
<dbReference type="FunFam" id="2.40.30.60:FF:000001">
    <property type="entry name" value="Ribosome maturation factor RimM"/>
    <property type="match status" value="1"/>
</dbReference>
<dbReference type="Gene3D" id="2.30.30.240">
    <property type="entry name" value="PRC-barrel domain"/>
    <property type="match status" value="1"/>
</dbReference>
<dbReference type="Gene3D" id="2.40.30.60">
    <property type="entry name" value="RimM"/>
    <property type="match status" value="1"/>
</dbReference>
<dbReference type="HAMAP" id="MF_00014">
    <property type="entry name" value="Ribosome_mat_RimM"/>
    <property type="match status" value="1"/>
</dbReference>
<dbReference type="InterPro" id="IPR011033">
    <property type="entry name" value="PRC_barrel-like_sf"/>
</dbReference>
<dbReference type="InterPro" id="IPR056792">
    <property type="entry name" value="PRC_RimM"/>
</dbReference>
<dbReference type="InterPro" id="IPR011961">
    <property type="entry name" value="RimM"/>
</dbReference>
<dbReference type="InterPro" id="IPR002676">
    <property type="entry name" value="RimM_N"/>
</dbReference>
<dbReference type="InterPro" id="IPR036976">
    <property type="entry name" value="RimM_N_sf"/>
</dbReference>
<dbReference type="InterPro" id="IPR009000">
    <property type="entry name" value="Transl_B-barrel_sf"/>
</dbReference>
<dbReference type="NCBIfam" id="TIGR02273">
    <property type="entry name" value="16S_RimM"/>
    <property type="match status" value="1"/>
</dbReference>
<dbReference type="PANTHER" id="PTHR33692">
    <property type="entry name" value="RIBOSOME MATURATION FACTOR RIMM"/>
    <property type="match status" value="1"/>
</dbReference>
<dbReference type="PANTHER" id="PTHR33692:SF1">
    <property type="entry name" value="RIBOSOME MATURATION FACTOR RIMM"/>
    <property type="match status" value="1"/>
</dbReference>
<dbReference type="Pfam" id="PF24986">
    <property type="entry name" value="PRC_RimM"/>
    <property type="match status" value="1"/>
</dbReference>
<dbReference type="Pfam" id="PF01782">
    <property type="entry name" value="RimM"/>
    <property type="match status" value="1"/>
</dbReference>
<dbReference type="SUPFAM" id="SSF50346">
    <property type="entry name" value="PRC-barrel domain"/>
    <property type="match status" value="1"/>
</dbReference>
<dbReference type="SUPFAM" id="SSF50447">
    <property type="entry name" value="Translation proteins"/>
    <property type="match status" value="1"/>
</dbReference>
<keyword id="KW-0143">Chaperone</keyword>
<keyword id="KW-0963">Cytoplasm</keyword>
<keyword id="KW-0690">Ribosome biogenesis</keyword>
<keyword id="KW-0698">rRNA processing</keyword>
<name>RIMM_SERP5</name>
<gene>
    <name evidence="1" type="primary">rimM</name>
    <name type="ordered locus">Spro_0853</name>
</gene>
<accession>A8GA19</accession>
<comment type="function">
    <text evidence="1">An accessory protein needed during the final step in the assembly of 30S ribosomal subunit, possibly for assembly of the head region. Essential for efficient processing of 16S rRNA. May be needed both before and after RbfA during the maturation of 16S rRNA. It has affinity for free ribosomal 30S subunits but not for 70S ribosomes.</text>
</comment>
<comment type="subunit">
    <text evidence="1">Binds ribosomal protein uS19.</text>
</comment>
<comment type="subcellular location">
    <subcellularLocation>
        <location evidence="1">Cytoplasm</location>
    </subcellularLocation>
</comment>
<comment type="domain">
    <text evidence="1">The PRC barrel domain binds ribosomal protein uS19.</text>
</comment>
<comment type="similarity">
    <text evidence="1">Belongs to the RimM family.</text>
</comment>
<sequence length="182" mass="20726">MSKQLKPVAPKQPIVLGKMGSTYGIRGWLRVFSSTENAESIFDYQPWLIQRSGQWQFVELEDWKRHSQDLIIKVKGIDDRDAANLLTNCEIVVDSEQLPPLEGDDYYWKDLMGCQVVTTSGYELGKVIDMMETGSNDVMVVRANLKDAFGMKERLVPFLHGQVIKKVDLTARVIEADWDPGF</sequence>